<evidence type="ECO:0000255" key="1">
    <source>
        <dbReference type="HAMAP-Rule" id="MF_00003"/>
    </source>
</evidence>
<keyword id="KW-0963">Cytoplasm</keyword>
<keyword id="KW-0690">Ribosome biogenesis</keyword>
<protein>
    <recommendedName>
        <fullName evidence="1">Ribosome-binding factor A</fullName>
    </recommendedName>
</protein>
<proteinExistence type="inferred from homology"/>
<organism>
    <name type="scientific">Enterobacter sp. (strain 638)</name>
    <dbReference type="NCBI Taxonomy" id="399742"/>
    <lineage>
        <taxon>Bacteria</taxon>
        <taxon>Pseudomonadati</taxon>
        <taxon>Pseudomonadota</taxon>
        <taxon>Gammaproteobacteria</taxon>
        <taxon>Enterobacterales</taxon>
        <taxon>Enterobacteriaceae</taxon>
        <taxon>Enterobacter</taxon>
    </lineage>
</organism>
<accession>A4WEY2</accession>
<sequence length="133" mass="15165">MAKEFGRPQRVAQEMQKEIALILQREIKDPRVGMMTTVSGVEMSRDLAYAKVFVTFLNDQDEAAVKNGIKALQEASGFIRSLLGKAMRLRIVPELTFFYDNSLVEGMRMSNLVTTVVKHDDERRVNPDDEKED</sequence>
<feature type="chain" id="PRO_1000057022" description="Ribosome-binding factor A">
    <location>
        <begin position="1"/>
        <end position="133"/>
    </location>
</feature>
<dbReference type="EMBL" id="CP000653">
    <property type="protein sequence ID" value="ABP62262.1"/>
    <property type="molecule type" value="Genomic_DNA"/>
</dbReference>
<dbReference type="RefSeq" id="WP_015960587.1">
    <property type="nucleotide sequence ID" value="NC_009436.1"/>
</dbReference>
<dbReference type="SMR" id="A4WEY2"/>
<dbReference type="STRING" id="399742.Ent638_3604"/>
<dbReference type="GeneID" id="93306571"/>
<dbReference type="KEGG" id="ent:Ent638_3604"/>
<dbReference type="eggNOG" id="COG0858">
    <property type="taxonomic scope" value="Bacteria"/>
</dbReference>
<dbReference type="HOGENOM" id="CLU_089475_5_0_6"/>
<dbReference type="OrthoDB" id="307788at2"/>
<dbReference type="Proteomes" id="UP000000230">
    <property type="component" value="Chromosome"/>
</dbReference>
<dbReference type="GO" id="GO:0005829">
    <property type="term" value="C:cytosol"/>
    <property type="evidence" value="ECO:0007669"/>
    <property type="project" value="TreeGrafter"/>
</dbReference>
<dbReference type="GO" id="GO:0043024">
    <property type="term" value="F:ribosomal small subunit binding"/>
    <property type="evidence" value="ECO:0007669"/>
    <property type="project" value="TreeGrafter"/>
</dbReference>
<dbReference type="GO" id="GO:0030490">
    <property type="term" value="P:maturation of SSU-rRNA"/>
    <property type="evidence" value="ECO:0007669"/>
    <property type="project" value="UniProtKB-UniRule"/>
</dbReference>
<dbReference type="FunFam" id="3.30.300.20:FF:000007">
    <property type="entry name" value="Ribosome-binding factor A"/>
    <property type="match status" value="1"/>
</dbReference>
<dbReference type="Gene3D" id="3.30.300.20">
    <property type="match status" value="1"/>
</dbReference>
<dbReference type="HAMAP" id="MF_00003">
    <property type="entry name" value="RbfA"/>
    <property type="match status" value="1"/>
</dbReference>
<dbReference type="InterPro" id="IPR015946">
    <property type="entry name" value="KH_dom-like_a/b"/>
</dbReference>
<dbReference type="InterPro" id="IPR000238">
    <property type="entry name" value="RbfA"/>
</dbReference>
<dbReference type="InterPro" id="IPR023799">
    <property type="entry name" value="RbfA_dom_sf"/>
</dbReference>
<dbReference type="InterPro" id="IPR020053">
    <property type="entry name" value="Ribosome-bd_factorA_CS"/>
</dbReference>
<dbReference type="NCBIfam" id="TIGR00082">
    <property type="entry name" value="rbfA"/>
    <property type="match status" value="1"/>
</dbReference>
<dbReference type="PANTHER" id="PTHR33515">
    <property type="entry name" value="RIBOSOME-BINDING FACTOR A, CHLOROPLASTIC-RELATED"/>
    <property type="match status" value="1"/>
</dbReference>
<dbReference type="PANTHER" id="PTHR33515:SF1">
    <property type="entry name" value="RIBOSOME-BINDING FACTOR A, CHLOROPLASTIC-RELATED"/>
    <property type="match status" value="1"/>
</dbReference>
<dbReference type="Pfam" id="PF02033">
    <property type="entry name" value="RBFA"/>
    <property type="match status" value="1"/>
</dbReference>
<dbReference type="SUPFAM" id="SSF89919">
    <property type="entry name" value="Ribosome-binding factor A, RbfA"/>
    <property type="match status" value="1"/>
</dbReference>
<dbReference type="PROSITE" id="PS01319">
    <property type="entry name" value="RBFA"/>
    <property type="match status" value="1"/>
</dbReference>
<gene>
    <name evidence="1" type="primary">rbfA</name>
    <name type="ordered locus">Ent638_3604</name>
</gene>
<comment type="function">
    <text evidence="1">One of several proteins that assist in the late maturation steps of the functional core of the 30S ribosomal subunit. Associates with free 30S ribosomal subunits (but not with 30S subunits that are part of 70S ribosomes or polysomes). Required for efficient processing of 16S rRNA. May interact with the 5'-terminal helix region of 16S rRNA.</text>
</comment>
<comment type="subunit">
    <text evidence="1">Monomer. Binds 30S ribosomal subunits, but not 50S ribosomal subunits or 70S ribosomes.</text>
</comment>
<comment type="subcellular location">
    <subcellularLocation>
        <location evidence="1">Cytoplasm</location>
    </subcellularLocation>
</comment>
<comment type="similarity">
    <text evidence="1">Belongs to the RbfA family.</text>
</comment>
<reference key="1">
    <citation type="journal article" date="2010" name="PLoS Genet.">
        <title>Genome sequence of the plant growth promoting endophytic bacterium Enterobacter sp. 638.</title>
        <authorList>
            <person name="Taghavi S."/>
            <person name="van der Lelie D."/>
            <person name="Hoffman A."/>
            <person name="Zhang Y.B."/>
            <person name="Walla M.D."/>
            <person name="Vangronsveld J."/>
            <person name="Newman L."/>
            <person name="Monchy S."/>
        </authorList>
    </citation>
    <scope>NUCLEOTIDE SEQUENCE [LARGE SCALE GENOMIC DNA]</scope>
    <source>
        <strain>638</strain>
    </source>
</reference>
<name>RBFA_ENT38</name>